<organism>
    <name type="scientific">Ralstonia pickettii (strain 12J)</name>
    <dbReference type="NCBI Taxonomy" id="402626"/>
    <lineage>
        <taxon>Bacteria</taxon>
        <taxon>Pseudomonadati</taxon>
        <taxon>Pseudomonadota</taxon>
        <taxon>Betaproteobacteria</taxon>
        <taxon>Burkholderiales</taxon>
        <taxon>Burkholderiaceae</taxon>
        <taxon>Ralstonia</taxon>
    </lineage>
</organism>
<dbReference type="EMBL" id="CP001068">
    <property type="protein sequence ID" value="ACD27859.1"/>
    <property type="molecule type" value="Genomic_DNA"/>
</dbReference>
<dbReference type="SMR" id="B2UAR2"/>
<dbReference type="STRING" id="402626.Rpic_2734"/>
<dbReference type="KEGG" id="rpi:Rpic_2734"/>
<dbReference type="eggNOG" id="COG2127">
    <property type="taxonomic scope" value="Bacteria"/>
</dbReference>
<dbReference type="HOGENOM" id="CLU_134358_2_1_4"/>
<dbReference type="GO" id="GO:0030163">
    <property type="term" value="P:protein catabolic process"/>
    <property type="evidence" value="ECO:0007669"/>
    <property type="project" value="InterPro"/>
</dbReference>
<dbReference type="GO" id="GO:0006508">
    <property type="term" value="P:proteolysis"/>
    <property type="evidence" value="ECO:0007669"/>
    <property type="project" value="UniProtKB-UniRule"/>
</dbReference>
<dbReference type="FunFam" id="3.30.1390.10:FF:000002">
    <property type="entry name" value="ATP-dependent Clp protease adapter protein ClpS"/>
    <property type="match status" value="1"/>
</dbReference>
<dbReference type="Gene3D" id="3.30.1390.10">
    <property type="match status" value="1"/>
</dbReference>
<dbReference type="HAMAP" id="MF_00302">
    <property type="entry name" value="ClpS"/>
    <property type="match status" value="1"/>
</dbReference>
<dbReference type="InterPro" id="IPR022935">
    <property type="entry name" value="ClpS"/>
</dbReference>
<dbReference type="InterPro" id="IPR003769">
    <property type="entry name" value="ClpS_core"/>
</dbReference>
<dbReference type="InterPro" id="IPR014719">
    <property type="entry name" value="Ribosomal_bL12_C/ClpS-like"/>
</dbReference>
<dbReference type="NCBIfam" id="NF000672">
    <property type="entry name" value="PRK00033.1-5"/>
    <property type="match status" value="1"/>
</dbReference>
<dbReference type="PANTHER" id="PTHR33473:SF19">
    <property type="entry name" value="ATP-DEPENDENT CLP PROTEASE ADAPTER PROTEIN CLPS"/>
    <property type="match status" value="1"/>
</dbReference>
<dbReference type="PANTHER" id="PTHR33473">
    <property type="entry name" value="ATP-DEPENDENT CLP PROTEASE ADAPTER PROTEIN CLPS1, CHLOROPLASTIC"/>
    <property type="match status" value="1"/>
</dbReference>
<dbReference type="Pfam" id="PF02617">
    <property type="entry name" value="ClpS"/>
    <property type="match status" value="1"/>
</dbReference>
<dbReference type="SUPFAM" id="SSF54736">
    <property type="entry name" value="ClpS-like"/>
    <property type="match status" value="1"/>
</dbReference>
<gene>
    <name evidence="1" type="primary">clpS</name>
    <name type="ordered locus">Rpic_2734</name>
</gene>
<feature type="chain" id="PRO_1000115468" description="ATP-dependent Clp protease adapter protein ClpS">
    <location>
        <begin position="1"/>
        <end position="108"/>
    </location>
</feature>
<accession>B2UAR2</accession>
<protein>
    <recommendedName>
        <fullName evidence="1">ATP-dependent Clp protease adapter protein ClpS</fullName>
    </recommendedName>
</protein>
<reference key="1">
    <citation type="submission" date="2008-05" db="EMBL/GenBank/DDBJ databases">
        <title>Complete sequence of chromosome 1 of Ralstonia pickettii 12J.</title>
        <authorList>
            <person name="Lucas S."/>
            <person name="Copeland A."/>
            <person name="Lapidus A."/>
            <person name="Glavina del Rio T."/>
            <person name="Dalin E."/>
            <person name="Tice H."/>
            <person name="Bruce D."/>
            <person name="Goodwin L."/>
            <person name="Pitluck S."/>
            <person name="Meincke L."/>
            <person name="Brettin T."/>
            <person name="Detter J.C."/>
            <person name="Han C."/>
            <person name="Kuske C.R."/>
            <person name="Schmutz J."/>
            <person name="Larimer F."/>
            <person name="Land M."/>
            <person name="Hauser L."/>
            <person name="Kyrpides N."/>
            <person name="Mikhailova N."/>
            <person name="Marsh T."/>
            <person name="Richardson P."/>
        </authorList>
    </citation>
    <scope>NUCLEOTIDE SEQUENCE [LARGE SCALE GENOMIC DNA]</scope>
    <source>
        <strain>12J</strain>
    </source>
</reference>
<evidence type="ECO:0000255" key="1">
    <source>
        <dbReference type="HAMAP-Rule" id="MF_00302"/>
    </source>
</evidence>
<name>CLPS_RALPJ</name>
<sequence>MAIRQATTPQHDAGTVLERKEQALKPPAMYKVLLLNDDYTPMEFVVMILQQYFSKDRETATQIMLTVHREGKGVCGLYTRDIAATKVELVSTHARQAGHPLQCVMEEA</sequence>
<proteinExistence type="inferred from homology"/>
<comment type="function">
    <text evidence="1">Involved in the modulation of the specificity of the ClpAP-mediated ATP-dependent protein degradation.</text>
</comment>
<comment type="subunit">
    <text evidence="1">Binds to the N-terminal domain of the chaperone ClpA.</text>
</comment>
<comment type="similarity">
    <text evidence="1">Belongs to the ClpS family.</text>
</comment>